<keyword id="KW-0224">Dipeptidase</keyword>
<keyword id="KW-0378">Hydrolase</keyword>
<keyword id="KW-0645">Protease</keyword>
<name>PEPDB_STRP3</name>
<reference key="1">
    <citation type="journal article" date="2002" name="Proc. Natl. Acad. Sci. U.S.A.">
        <title>Genome sequence of a serotype M3 strain of group A Streptococcus: phage-encoded toxins, the high-virulence phenotype, and clone emergence.</title>
        <authorList>
            <person name="Beres S.B."/>
            <person name="Sylva G.L."/>
            <person name="Barbian K.D."/>
            <person name="Lei B."/>
            <person name="Hoff J.S."/>
            <person name="Mammarella N.D."/>
            <person name="Liu M.-Y."/>
            <person name="Smoot J.C."/>
            <person name="Porcella S.F."/>
            <person name="Parkins L.D."/>
            <person name="Campbell D.S."/>
            <person name="Smith T.M."/>
            <person name="McCormick J.K."/>
            <person name="Leung D.Y.M."/>
            <person name="Schlievert P.M."/>
            <person name="Musser J.M."/>
        </authorList>
    </citation>
    <scope>NUCLEOTIDE SEQUENCE [LARGE SCALE GENOMIC DNA]</scope>
    <source>
        <strain>ATCC BAA-595 / MGAS315</strain>
    </source>
</reference>
<protein>
    <recommendedName>
        <fullName>Probable dipeptidase B</fullName>
        <ecNumber>3.4.13.19</ecNumber>
    </recommendedName>
</protein>
<organism>
    <name type="scientific">Streptococcus pyogenes serotype M3 (strain ATCC BAA-595 / MGAS315)</name>
    <dbReference type="NCBI Taxonomy" id="198466"/>
    <lineage>
        <taxon>Bacteria</taxon>
        <taxon>Bacillati</taxon>
        <taxon>Bacillota</taxon>
        <taxon>Bacilli</taxon>
        <taxon>Lactobacillales</taxon>
        <taxon>Streptococcaceae</taxon>
        <taxon>Streptococcus</taxon>
    </lineage>
</organism>
<accession>P0DD26</accession>
<accession>Q79W34</accession>
<accession>Q8K5M7</accession>
<feature type="chain" id="PRO_0000220391" description="Probable dipeptidase B">
    <location>
        <begin position="1"/>
        <end position="499"/>
    </location>
</feature>
<feature type="active site" evidence="1">
    <location>
        <position position="26"/>
    </location>
</feature>
<gene>
    <name type="primary">pepDB</name>
    <name type="ordered locus">SpyM3_1763</name>
</gene>
<dbReference type="EC" id="3.4.13.19"/>
<dbReference type="EMBL" id="AE014074">
    <property type="protein sequence ID" value="AAM80370.1"/>
    <property type="molecule type" value="Genomic_DNA"/>
</dbReference>
<dbReference type="RefSeq" id="WP_011055067.1">
    <property type="nucleotide sequence ID" value="NC_004070.1"/>
</dbReference>
<dbReference type="SMR" id="P0DD26"/>
<dbReference type="MEROPS" id="C69.002"/>
<dbReference type="KEGG" id="spg:SpyM3_1763"/>
<dbReference type="HOGENOM" id="CLU_014823_0_1_9"/>
<dbReference type="Proteomes" id="UP000000564">
    <property type="component" value="Chromosome"/>
</dbReference>
<dbReference type="GO" id="GO:0070004">
    <property type="term" value="F:cysteine-type exopeptidase activity"/>
    <property type="evidence" value="ECO:0007669"/>
    <property type="project" value="InterPro"/>
</dbReference>
<dbReference type="GO" id="GO:0016805">
    <property type="term" value="F:dipeptidase activity"/>
    <property type="evidence" value="ECO:0007669"/>
    <property type="project" value="UniProtKB-KW"/>
</dbReference>
<dbReference type="GO" id="GO:0006508">
    <property type="term" value="P:proteolysis"/>
    <property type="evidence" value="ECO:0007669"/>
    <property type="project" value="UniProtKB-KW"/>
</dbReference>
<dbReference type="Gene3D" id="3.60.60.10">
    <property type="entry name" value="Penicillin V Acylase, Chain A"/>
    <property type="match status" value="1"/>
</dbReference>
<dbReference type="InterPro" id="IPR047804">
    <property type="entry name" value="C69_dipept_A-like"/>
</dbReference>
<dbReference type="InterPro" id="IPR005322">
    <property type="entry name" value="Peptidase_C69"/>
</dbReference>
<dbReference type="NCBIfam" id="NF033678">
    <property type="entry name" value="C69_fam_dipept"/>
    <property type="match status" value="1"/>
</dbReference>
<dbReference type="PANTHER" id="PTHR12994:SF17">
    <property type="entry name" value="LD30995P"/>
    <property type="match status" value="1"/>
</dbReference>
<dbReference type="PANTHER" id="PTHR12994">
    <property type="entry name" value="SECERNIN"/>
    <property type="match status" value="1"/>
</dbReference>
<dbReference type="Pfam" id="PF03577">
    <property type="entry name" value="Peptidase_C69"/>
    <property type="match status" value="1"/>
</dbReference>
<evidence type="ECO:0000255" key="1"/>
<evidence type="ECO:0000305" key="2"/>
<sequence>MINKKISLGVLSILTAFSLQSVSYACTGFIIGKDLTKDGSLLYGRTEDLEPHHNKNFIVRLAKDNPAGEKWKDPSNGFEYPLPEHSYRYSAIPDVTPNKGVYDEAGFNEFGVSMSATVSTSANDAIQKIDPYVKNGLAESSMASVILPSVKTAREGVALIAKIVTEKGAAEGNIVTLADKDGIWYMEILSGHQYVAIKFPDDKYAVFPNTFYLGHVDFNDKENTIASEDVEKVAKKAKSYTEVDGKFHIAKSYNPPLNDANRSRSFSGIKSLDPDSKVTYKDSNYELLQSTDKTFSLEDAMKLQRNRFEGLDLKPLDQMALDGKGKPKSKKAVKGYAYPISNPNVMEAHIFQLKKDIPAELGGGVMWLSIGSPRNAPYLPYLGNISRTYEAYQEKSTQYNDKSWYWTVSHINDLVAAHPKPFGTKVIDEMKGLEKTWIAEQDKTTKEISDLVVSDPKAAQEKADKISLDRAEKTFKRLKAIEAKLVKEKPKNKKGLNRS</sequence>
<comment type="catalytic activity">
    <reaction>
        <text>an L-aminoacyl-L-amino acid + H2O = 2 an L-alpha-amino acid</text>
        <dbReference type="Rhea" id="RHEA:48940"/>
        <dbReference type="ChEBI" id="CHEBI:15377"/>
        <dbReference type="ChEBI" id="CHEBI:59869"/>
        <dbReference type="ChEBI" id="CHEBI:77460"/>
        <dbReference type="EC" id="3.4.13.19"/>
    </reaction>
</comment>
<comment type="similarity">
    <text evidence="2">Belongs to the peptidase C69 family.</text>
</comment>
<proteinExistence type="inferred from homology"/>